<accession>B9K6P7</accession>
<gene>
    <name evidence="1" type="primary">murG</name>
    <name type="ordered locus">CTN_0454</name>
</gene>
<sequence length="339" mass="37999">MIRVAAAGGGTGGHLYPLLAILETLSKDVETKVLFFAVKGKIDEKVVKQEHPEYEVVTLDVRGLFRPLYHPKNFWRAAKVVNAILKAKKELLRFKPDVIVLTGGYISGVVGLAAKNMGVPIFLHEQNVVPGLAVKTVAKYARKIFVSFERTREFLTEWKDRVLFTGCPVRETKEEVDLEDFVLVLGGSLGSDLINSLMEEVYRRISCIRFVHSTGSRRWAERLSVFPNVTAHPYIENMSSFWKKARASISRAGASTIGEMIYYGVPGVLIPWEGSAESHQLENALEAERLGYAIVVREKEATPQKIIEAIDKTMKKGKIEKMKENPATIISREILGEIR</sequence>
<organism>
    <name type="scientific">Thermotoga neapolitana (strain ATCC 49049 / DSM 4359 / NBRC 107923 / NS-E)</name>
    <dbReference type="NCBI Taxonomy" id="309803"/>
    <lineage>
        <taxon>Bacteria</taxon>
        <taxon>Thermotogati</taxon>
        <taxon>Thermotogota</taxon>
        <taxon>Thermotogae</taxon>
        <taxon>Thermotogales</taxon>
        <taxon>Thermotogaceae</taxon>
        <taxon>Thermotoga</taxon>
    </lineage>
</organism>
<dbReference type="EC" id="2.4.1.227" evidence="1"/>
<dbReference type="EMBL" id="CP000916">
    <property type="protein sequence ID" value="ACM22630.1"/>
    <property type="molecule type" value="Genomic_DNA"/>
</dbReference>
<dbReference type="RefSeq" id="WP_015918949.1">
    <property type="nucleotide sequence ID" value="NC_011978.1"/>
</dbReference>
<dbReference type="SMR" id="B9K6P7"/>
<dbReference type="STRING" id="309803.CTN_0454"/>
<dbReference type="CAZy" id="GT28">
    <property type="family name" value="Glycosyltransferase Family 28"/>
</dbReference>
<dbReference type="KEGG" id="tna:CTN_0454"/>
<dbReference type="eggNOG" id="COG0707">
    <property type="taxonomic scope" value="Bacteria"/>
</dbReference>
<dbReference type="HOGENOM" id="CLU_037404_0_1_0"/>
<dbReference type="UniPathway" id="UPA00219"/>
<dbReference type="Proteomes" id="UP000000445">
    <property type="component" value="Chromosome"/>
</dbReference>
<dbReference type="GO" id="GO:0005886">
    <property type="term" value="C:plasma membrane"/>
    <property type="evidence" value="ECO:0007669"/>
    <property type="project" value="UniProtKB-SubCell"/>
</dbReference>
<dbReference type="GO" id="GO:0051991">
    <property type="term" value="F:UDP-N-acetyl-D-glucosamine:N-acetylmuramoyl-L-alanyl-D-glutamyl-meso-2,6-diaminopimelyl-D-alanyl-D-alanine-diphosphoundecaprenol 4-beta-N-acetylglucosaminlytransferase activity"/>
    <property type="evidence" value="ECO:0007669"/>
    <property type="project" value="RHEA"/>
</dbReference>
<dbReference type="GO" id="GO:0050511">
    <property type="term" value="F:undecaprenyldiphospho-muramoylpentapeptide beta-N-acetylglucosaminyltransferase activity"/>
    <property type="evidence" value="ECO:0007669"/>
    <property type="project" value="UniProtKB-UniRule"/>
</dbReference>
<dbReference type="GO" id="GO:0005975">
    <property type="term" value="P:carbohydrate metabolic process"/>
    <property type="evidence" value="ECO:0007669"/>
    <property type="project" value="InterPro"/>
</dbReference>
<dbReference type="GO" id="GO:0051301">
    <property type="term" value="P:cell division"/>
    <property type="evidence" value="ECO:0007669"/>
    <property type="project" value="UniProtKB-KW"/>
</dbReference>
<dbReference type="GO" id="GO:0071555">
    <property type="term" value="P:cell wall organization"/>
    <property type="evidence" value="ECO:0007669"/>
    <property type="project" value="UniProtKB-KW"/>
</dbReference>
<dbReference type="GO" id="GO:0030259">
    <property type="term" value="P:lipid glycosylation"/>
    <property type="evidence" value="ECO:0007669"/>
    <property type="project" value="UniProtKB-UniRule"/>
</dbReference>
<dbReference type="GO" id="GO:0009252">
    <property type="term" value="P:peptidoglycan biosynthetic process"/>
    <property type="evidence" value="ECO:0007669"/>
    <property type="project" value="UniProtKB-UniRule"/>
</dbReference>
<dbReference type="GO" id="GO:0008360">
    <property type="term" value="P:regulation of cell shape"/>
    <property type="evidence" value="ECO:0007669"/>
    <property type="project" value="UniProtKB-KW"/>
</dbReference>
<dbReference type="CDD" id="cd03785">
    <property type="entry name" value="GT28_MurG"/>
    <property type="match status" value="1"/>
</dbReference>
<dbReference type="Gene3D" id="3.40.50.2000">
    <property type="entry name" value="Glycogen Phosphorylase B"/>
    <property type="match status" value="2"/>
</dbReference>
<dbReference type="HAMAP" id="MF_00033">
    <property type="entry name" value="MurG"/>
    <property type="match status" value="1"/>
</dbReference>
<dbReference type="InterPro" id="IPR006009">
    <property type="entry name" value="GlcNAc_MurG"/>
</dbReference>
<dbReference type="InterPro" id="IPR007235">
    <property type="entry name" value="Glyco_trans_28_C"/>
</dbReference>
<dbReference type="InterPro" id="IPR004276">
    <property type="entry name" value="GlycoTrans_28_N"/>
</dbReference>
<dbReference type="NCBIfam" id="TIGR01133">
    <property type="entry name" value="murG"/>
    <property type="match status" value="1"/>
</dbReference>
<dbReference type="PANTHER" id="PTHR21015:SF22">
    <property type="entry name" value="GLYCOSYLTRANSFERASE"/>
    <property type="match status" value="1"/>
</dbReference>
<dbReference type="PANTHER" id="PTHR21015">
    <property type="entry name" value="UDP-N-ACETYLGLUCOSAMINE--N-ACETYLMURAMYL-(PENTAPEPTIDE) PYROPHOSPHORYL-UNDECAPRENOL N-ACETYLGLUCOSAMINE TRANSFERASE 1"/>
    <property type="match status" value="1"/>
</dbReference>
<dbReference type="Pfam" id="PF04101">
    <property type="entry name" value="Glyco_tran_28_C"/>
    <property type="match status" value="1"/>
</dbReference>
<dbReference type="Pfam" id="PF03033">
    <property type="entry name" value="Glyco_transf_28"/>
    <property type="match status" value="1"/>
</dbReference>
<dbReference type="SUPFAM" id="SSF53756">
    <property type="entry name" value="UDP-Glycosyltransferase/glycogen phosphorylase"/>
    <property type="match status" value="1"/>
</dbReference>
<name>MURG_THENN</name>
<keyword id="KW-0131">Cell cycle</keyword>
<keyword id="KW-0132">Cell division</keyword>
<keyword id="KW-0997">Cell inner membrane</keyword>
<keyword id="KW-1003">Cell membrane</keyword>
<keyword id="KW-0133">Cell shape</keyword>
<keyword id="KW-0961">Cell wall biogenesis/degradation</keyword>
<keyword id="KW-0328">Glycosyltransferase</keyword>
<keyword id="KW-0472">Membrane</keyword>
<keyword id="KW-0573">Peptidoglycan synthesis</keyword>
<keyword id="KW-0808">Transferase</keyword>
<proteinExistence type="inferred from homology"/>
<comment type="function">
    <text evidence="1">Cell wall formation. Catalyzes the transfer of a GlcNAc subunit on undecaprenyl-pyrophosphoryl-MurNAc-pentapeptide (lipid intermediate I) to form undecaprenyl-pyrophosphoryl-MurNAc-(pentapeptide)GlcNAc (lipid intermediate II).</text>
</comment>
<comment type="catalytic activity">
    <reaction evidence="1">
        <text>di-trans,octa-cis-undecaprenyl diphospho-N-acetyl-alpha-D-muramoyl-L-alanyl-D-glutamyl-meso-2,6-diaminopimeloyl-D-alanyl-D-alanine + UDP-N-acetyl-alpha-D-glucosamine = di-trans,octa-cis-undecaprenyl diphospho-[N-acetyl-alpha-D-glucosaminyl-(1-&gt;4)]-N-acetyl-alpha-D-muramoyl-L-alanyl-D-glutamyl-meso-2,6-diaminopimeloyl-D-alanyl-D-alanine + UDP + H(+)</text>
        <dbReference type="Rhea" id="RHEA:31227"/>
        <dbReference type="ChEBI" id="CHEBI:15378"/>
        <dbReference type="ChEBI" id="CHEBI:57705"/>
        <dbReference type="ChEBI" id="CHEBI:58223"/>
        <dbReference type="ChEBI" id="CHEBI:61387"/>
        <dbReference type="ChEBI" id="CHEBI:61388"/>
        <dbReference type="EC" id="2.4.1.227"/>
    </reaction>
</comment>
<comment type="pathway">
    <text evidence="1">Cell wall biogenesis; peptidoglycan biosynthesis.</text>
</comment>
<comment type="subcellular location">
    <subcellularLocation>
        <location evidence="1">Cell inner membrane</location>
        <topology evidence="1">Peripheral membrane protein</topology>
        <orientation evidence="1">Cytoplasmic side</orientation>
    </subcellularLocation>
</comment>
<comment type="similarity">
    <text evidence="1">Belongs to the glycosyltransferase 28 family. MurG subfamily.</text>
</comment>
<evidence type="ECO:0000255" key="1">
    <source>
        <dbReference type="HAMAP-Rule" id="MF_00033"/>
    </source>
</evidence>
<feature type="chain" id="PRO_1000117036" description="UDP-N-acetylglucosamine--N-acetylmuramyl-(pentapeptide) pyrophosphoryl-undecaprenol N-acetylglucosamine transferase">
    <location>
        <begin position="1"/>
        <end position="339"/>
    </location>
</feature>
<feature type="binding site" evidence="1">
    <location>
        <begin position="11"/>
        <end position="13"/>
    </location>
    <ligand>
        <name>UDP-N-acetyl-alpha-D-glucosamine</name>
        <dbReference type="ChEBI" id="CHEBI:57705"/>
    </ligand>
</feature>
<feature type="binding site" evidence="1">
    <location>
        <position position="127"/>
    </location>
    <ligand>
        <name>UDP-N-acetyl-alpha-D-glucosamine</name>
        <dbReference type="ChEBI" id="CHEBI:57705"/>
    </ligand>
</feature>
<feature type="binding site" evidence="1">
    <location>
        <position position="170"/>
    </location>
    <ligand>
        <name>UDP-N-acetyl-alpha-D-glucosamine</name>
        <dbReference type="ChEBI" id="CHEBI:57705"/>
    </ligand>
</feature>
<feature type="binding site" evidence="1">
    <location>
        <position position="188"/>
    </location>
    <ligand>
        <name>UDP-N-acetyl-alpha-D-glucosamine</name>
        <dbReference type="ChEBI" id="CHEBI:57705"/>
    </ligand>
</feature>
<feature type="binding site" evidence="1">
    <location>
        <position position="235"/>
    </location>
    <ligand>
        <name>UDP-N-acetyl-alpha-D-glucosamine</name>
        <dbReference type="ChEBI" id="CHEBI:57705"/>
    </ligand>
</feature>
<feature type="binding site" evidence="1">
    <location>
        <position position="280"/>
    </location>
    <ligand>
        <name>UDP-N-acetyl-alpha-D-glucosamine</name>
        <dbReference type="ChEBI" id="CHEBI:57705"/>
    </ligand>
</feature>
<reference key="1">
    <citation type="submission" date="2007-11" db="EMBL/GenBank/DDBJ databases">
        <title>The genome sequence of the hyperthermophilic bacterium Thermotoga neapolitana.</title>
        <authorList>
            <person name="Lim S.K."/>
            <person name="Kim J.S."/>
            <person name="Cha S.H."/>
            <person name="Park B.C."/>
            <person name="Lee D.S."/>
            <person name="Tae H.S."/>
            <person name="Kim S.-J."/>
            <person name="Kim J.J."/>
            <person name="Park K.J."/>
            <person name="Lee S.Y."/>
        </authorList>
    </citation>
    <scope>NUCLEOTIDE SEQUENCE [LARGE SCALE GENOMIC DNA]</scope>
    <source>
        <strain>ATCC 49049 / DSM 4359 / NBRC 107923 / NS-E</strain>
    </source>
</reference>
<protein>
    <recommendedName>
        <fullName evidence="1">UDP-N-acetylglucosamine--N-acetylmuramyl-(pentapeptide) pyrophosphoryl-undecaprenol N-acetylglucosamine transferase</fullName>
        <ecNumber evidence="1">2.4.1.227</ecNumber>
    </recommendedName>
    <alternativeName>
        <fullName evidence="1">Undecaprenyl-PP-MurNAc-pentapeptide-UDPGlcNAc GlcNAc transferase</fullName>
    </alternativeName>
</protein>